<dbReference type="EC" id="2.7.7.6"/>
<dbReference type="EMBL" id="M94319">
    <property type="protein sequence ID" value="AAA23109.1"/>
    <property type="molecule type" value="Genomic_DNA"/>
</dbReference>
<dbReference type="SMR" id="P36251"/>
<dbReference type="GO" id="GO:0000428">
    <property type="term" value="C:DNA-directed RNA polymerase complex"/>
    <property type="evidence" value="ECO:0007669"/>
    <property type="project" value="UniProtKB-KW"/>
</dbReference>
<dbReference type="GO" id="GO:0003677">
    <property type="term" value="F:DNA binding"/>
    <property type="evidence" value="ECO:0007669"/>
    <property type="project" value="InterPro"/>
</dbReference>
<dbReference type="GO" id="GO:0003899">
    <property type="term" value="F:DNA-directed RNA polymerase activity"/>
    <property type="evidence" value="ECO:0007669"/>
    <property type="project" value="UniProtKB-EC"/>
</dbReference>
<dbReference type="GO" id="GO:0006351">
    <property type="term" value="P:DNA-templated transcription"/>
    <property type="evidence" value="ECO:0007669"/>
    <property type="project" value="InterPro"/>
</dbReference>
<dbReference type="Gene3D" id="3.90.1100.10">
    <property type="match status" value="1"/>
</dbReference>
<dbReference type="InterPro" id="IPR007644">
    <property type="entry name" value="RNA_pol_bsu_protrusion"/>
</dbReference>
<dbReference type="Pfam" id="PF04563">
    <property type="entry name" value="RNA_pol_Rpb2_1"/>
    <property type="match status" value="1"/>
</dbReference>
<dbReference type="SUPFAM" id="SSF64484">
    <property type="entry name" value="beta and beta-prime subunits of DNA dependent RNA-polymerase"/>
    <property type="match status" value="1"/>
</dbReference>
<evidence type="ECO:0000250" key="1"/>
<evidence type="ECO:0000305" key="2"/>
<proteinExistence type="inferred from homology"/>
<feature type="chain" id="PRO_0000047914" description="DNA-directed RNA polymerase subunit beta">
    <location>
        <begin position="1"/>
        <end position="178" status="greater than"/>
    </location>
</feature>
<feature type="non-terminal residue">
    <location>
        <position position="178"/>
    </location>
</feature>
<organism>
    <name type="scientific">Liberibacter asiaticus</name>
    <name type="common">Citrus greening disease</name>
    <name type="synonym">Liberobacter asiaticum</name>
    <dbReference type="NCBI Taxonomy" id="34021"/>
    <lineage>
        <taxon>Bacteria</taxon>
        <taxon>Pseudomonadati</taxon>
        <taxon>Pseudomonadota</taxon>
        <taxon>Alphaproteobacteria</taxon>
        <taxon>Hyphomicrobiales</taxon>
        <taxon>Rhizobiaceae</taxon>
        <taxon>Liberibacter</taxon>
    </lineage>
</organism>
<keyword id="KW-0240">DNA-directed RNA polymerase</keyword>
<keyword id="KW-0548">Nucleotidyltransferase</keyword>
<keyword id="KW-0804">Transcription</keyword>
<keyword id="KW-0808">Transferase</keyword>
<sequence>MAKGVVFNGLGRVRKFFGKNPEIIDIPDLIEVQKASYDHFLMMNIAPDERPNEGLQAAFKSVFPITAFSGAAMLEFVSYEFDPPKFDVDDCLWRDLTYAVPLKITLRLIVFDVDEFTGAKSIKDIKEQSIYMGDLPLMTKDGTFVIKGTQRIVVSQLHRSPGIHFDHDKGRASLSGKL</sequence>
<comment type="function">
    <text evidence="1">DNA-dependent RNA polymerase catalyzes the transcription of DNA into RNA using the four ribonucleoside triphosphates as substrates.</text>
</comment>
<comment type="catalytic activity">
    <reaction>
        <text>RNA(n) + a ribonucleoside 5'-triphosphate = RNA(n+1) + diphosphate</text>
        <dbReference type="Rhea" id="RHEA:21248"/>
        <dbReference type="Rhea" id="RHEA-COMP:14527"/>
        <dbReference type="Rhea" id="RHEA-COMP:17342"/>
        <dbReference type="ChEBI" id="CHEBI:33019"/>
        <dbReference type="ChEBI" id="CHEBI:61557"/>
        <dbReference type="ChEBI" id="CHEBI:140395"/>
        <dbReference type="EC" id="2.7.7.6"/>
    </reaction>
</comment>
<comment type="subunit">
    <text evidence="1">The RNAP catalytic core consists of 2 alpha, 1 beta, 1 beta' and 1 omega subunit. When a sigma factor is associated with the core the holoenzyme is formed, which can initiate transcription (By similarity).</text>
</comment>
<comment type="similarity">
    <text evidence="2">Belongs to the RNA polymerase beta chain family.</text>
</comment>
<protein>
    <recommendedName>
        <fullName>DNA-directed RNA polymerase subunit beta</fullName>
        <shortName>RNAP subunit beta</shortName>
        <ecNumber>2.7.7.6</ecNumber>
    </recommendedName>
    <alternativeName>
        <fullName>RNA polymerase subunit beta</fullName>
    </alternativeName>
    <alternativeName>
        <fullName>Transcriptase subunit beta</fullName>
    </alternativeName>
</protein>
<gene>
    <name type="primary">rpoB</name>
</gene>
<accession>P36251</accession>
<reference key="1">
    <citation type="journal article" date="1993" name="Curr. Microbiol.">
        <title>The genome of the non-cultured, bacterial-like organism associated with citrus greening disease contains the nusG-rplKAJL-rpoBC gene cluster and the gene for a bacteriophage type DNA polymerase.</title>
        <authorList>
            <person name="Villechanoux S."/>
            <person name="Garnier M."/>
            <person name="Laigret F."/>
            <person name="Renaudin J."/>
            <person name="Bove J.M."/>
        </authorList>
    </citation>
    <scope>NUCLEOTIDE SEQUENCE [GENOMIC DNA]</scope>
</reference>
<name>RPOB_LIBAS</name>